<name>FTSY_THEAC</name>
<feature type="chain" id="PRO_0000416706" description="Signal recognition particle receptor FtsY">
    <location>
        <begin position="1"/>
        <end position="288"/>
    </location>
</feature>
<feature type="binding site" evidence="1">
    <location>
        <begin position="93"/>
        <end position="100"/>
    </location>
    <ligand>
        <name>GTP</name>
        <dbReference type="ChEBI" id="CHEBI:37565"/>
    </ligand>
</feature>
<feature type="binding site" evidence="1">
    <location>
        <begin position="175"/>
        <end position="179"/>
    </location>
    <ligand>
        <name>GTP</name>
        <dbReference type="ChEBI" id="CHEBI:37565"/>
    </ligand>
</feature>
<feature type="binding site" evidence="1">
    <location>
        <begin position="233"/>
        <end position="236"/>
    </location>
    <ligand>
        <name>GTP</name>
        <dbReference type="ChEBI" id="CHEBI:37565"/>
    </ligand>
</feature>
<reference key="1">
    <citation type="journal article" date="2000" name="Nature">
        <title>The genome sequence of the thermoacidophilic scavenger Thermoplasma acidophilum.</title>
        <authorList>
            <person name="Ruepp A."/>
            <person name="Graml W."/>
            <person name="Santos-Martinez M.-L."/>
            <person name="Koretke K.K."/>
            <person name="Volker C."/>
            <person name="Mewes H.-W."/>
            <person name="Frishman D."/>
            <person name="Stocker S."/>
            <person name="Lupas A.N."/>
            <person name="Baumeister W."/>
        </authorList>
    </citation>
    <scope>NUCLEOTIDE SEQUENCE [LARGE SCALE GENOMIC DNA]</scope>
    <source>
        <strain>ATCC 25905 / DSM 1728 / JCM 9062 / NBRC 15155 / AMRC-C165</strain>
    </source>
</reference>
<sequence length="288" mass="32138">MFEKLKKKFAEIFHRKKIDPDEVADEIPLKLVEADVSLEAAEDLASLVRNKLKEDTTLDPNEVLSSSILEMMPEYKFDVLNVNKKPFVVLFLGINGTGKTTTIGKFAHYLKRNGKSVVIAAADTFRAGAIEQISLIGREAGTEVIRHDRGSDPSSVAFDAIEHARARNIDYVLIDTAGRMNTNKNLLDEMKKIKRVSKPDLTLLVIDAVSGQDSVNQARMFEENVGYDGVIVTKLDTDARGGSILSIYHDLKKPVLFVCTGQGLDDIMPFDRNWYVRKLIPEPENETA</sequence>
<comment type="function">
    <text evidence="1">Involved in targeting and insertion of nascent membrane proteins into the cytoplasmic membrane. Acts as a receptor for the complex formed by the signal recognition particle (SRP) and the ribosome-nascent chain (RNC).</text>
</comment>
<comment type="catalytic activity">
    <reaction evidence="1">
        <text>GTP + H2O = GDP + phosphate + H(+)</text>
        <dbReference type="Rhea" id="RHEA:19669"/>
        <dbReference type="ChEBI" id="CHEBI:15377"/>
        <dbReference type="ChEBI" id="CHEBI:15378"/>
        <dbReference type="ChEBI" id="CHEBI:37565"/>
        <dbReference type="ChEBI" id="CHEBI:43474"/>
        <dbReference type="ChEBI" id="CHEBI:58189"/>
        <dbReference type="EC" id="3.6.5.4"/>
    </reaction>
</comment>
<comment type="subunit">
    <text evidence="1">Part of the signal recognition particle protein translocation system, which is composed of SRP and FtsY.</text>
</comment>
<comment type="subcellular location">
    <subcellularLocation>
        <location>Cell membrane</location>
        <topology>Peripheral membrane protein</topology>
        <orientation>Cytoplasmic side</orientation>
    </subcellularLocation>
    <subcellularLocation>
        <location evidence="1">Cytoplasm</location>
    </subcellularLocation>
</comment>
<comment type="similarity">
    <text evidence="1">Belongs to the GTP-binding SRP family. FtsY subfamily.</text>
</comment>
<dbReference type="EC" id="3.6.5.4" evidence="1"/>
<dbReference type="EMBL" id="AL445066">
    <property type="protein sequence ID" value="CAC12205.1"/>
    <property type="molecule type" value="Genomic_DNA"/>
</dbReference>
<dbReference type="RefSeq" id="WP_010901488.1">
    <property type="nucleotide sequence ID" value="NC_002578.1"/>
</dbReference>
<dbReference type="SMR" id="Q9HJ93"/>
<dbReference type="FunCoup" id="Q9HJ93">
    <property type="interactions" value="78"/>
</dbReference>
<dbReference type="STRING" id="273075.gene:9572298"/>
<dbReference type="PaxDb" id="273075-Ta1077"/>
<dbReference type="EnsemblBacteria" id="CAC12205">
    <property type="protein sequence ID" value="CAC12205"/>
    <property type="gene ID" value="CAC12205"/>
</dbReference>
<dbReference type="KEGG" id="tac:Ta1077"/>
<dbReference type="eggNOG" id="arCOG01227">
    <property type="taxonomic scope" value="Archaea"/>
</dbReference>
<dbReference type="HOGENOM" id="CLU_009301_3_1_2"/>
<dbReference type="InParanoid" id="Q9HJ93"/>
<dbReference type="OrthoDB" id="372188at2157"/>
<dbReference type="Proteomes" id="UP000001024">
    <property type="component" value="Chromosome"/>
</dbReference>
<dbReference type="GO" id="GO:0005737">
    <property type="term" value="C:cytoplasm"/>
    <property type="evidence" value="ECO:0007669"/>
    <property type="project" value="UniProtKB-SubCell"/>
</dbReference>
<dbReference type="GO" id="GO:0005886">
    <property type="term" value="C:plasma membrane"/>
    <property type="evidence" value="ECO:0007669"/>
    <property type="project" value="UniProtKB-SubCell"/>
</dbReference>
<dbReference type="GO" id="GO:0016887">
    <property type="term" value="F:ATP hydrolysis activity"/>
    <property type="evidence" value="ECO:0007669"/>
    <property type="project" value="InterPro"/>
</dbReference>
<dbReference type="GO" id="GO:0005525">
    <property type="term" value="F:GTP binding"/>
    <property type="evidence" value="ECO:0007669"/>
    <property type="project" value="UniProtKB-UniRule"/>
</dbReference>
<dbReference type="GO" id="GO:0003924">
    <property type="term" value="F:GTPase activity"/>
    <property type="evidence" value="ECO:0007669"/>
    <property type="project" value="UniProtKB-UniRule"/>
</dbReference>
<dbReference type="GO" id="GO:0005047">
    <property type="term" value="F:signal recognition particle binding"/>
    <property type="evidence" value="ECO:0007669"/>
    <property type="project" value="TreeGrafter"/>
</dbReference>
<dbReference type="GO" id="GO:0006614">
    <property type="term" value="P:SRP-dependent cotranslational protein targeting to membrane"/>
    <property type="evidence" value="ECO:0007669"/>
    <property type="project" value="InterPro"/>
</dbReference>
<dbReference type="CDD" id="cd17874">
    <property type="entry name" value="FtsY"/>
    <property type="match status" value="1"/>
</dbReference>
<dbReference type="FunFam" id="3.40.50.300:FF:000053">
    <property type="entry name" value="Signal recognition particle receptor FtsY"/>
    <property type="match status" value="1"/>
</dbReference>
<dbReference type="Gene3D" id="3.40.50.300">
    <property type="entry name" value="P-loop containing nucleotide triphosphate hydrolases"/>
    <property type="match status" value="1"/>
</dbReference>
<dbReference type="Gene3D" id="1.20.120.140">
    <property type="entry name" value="Signal recognition particle SRP54, nucleotide-binding domain"/>
    <property type="match status" value="1"/>
</dbReference>
<dbReference type="HAMAP" id="MF_00920">
    <property type="entry name" value="FtsY"/>
    <property type="match status" value="1"/>
</dbReference>
<dbReference type="InterPro" id="IPR003593">
    <property type="entry name" value="AAA+_ATPase"/>
</dbReference>
<dbReference type="InterPro" id="IPR027417">
    <property type="entry name" value="P-loop_NTPase"/>
</dbReference>
<dbReference type="InterPro" id="IPR013822">
    <property type="entry name" value="Signal_recog_particl_SRP54_hlx"/>
</dbReference>
<dbReference type="InterPro" id="IPR004390">
    <property type="entry name" value="SR_rcpt_FtsY"/>
</dbReference>
<dbReference type="InterPro" id="IPR036225">
    <property type="entry name" value="SRP/SRP_N"/>
</dbReference>
<dbReference type="InterPro" id="IPR000897">
    <property type="entry name" value="SRP54_GTPase_dom"/>
</dbReference>
<dbReference type="InterPro" id="IPR042101">
    <property type="entry name" value="SRP54_N_sf"/>
</dbReference>
<dbReference type="NCBIfam" id="TIGR00064">
    <property type="entry name" value="ftsY"/>
    <property type="match status" value="1"/>
</dbReference>
<dbReference type="PANTHER" id="PTHR43134">
    <property type="entry name" value="SIGNAL RECOGNITION PARTICLE RECEPTOR SUBUNIT ALPHA"/>
    <property type="match status" value="1"/>
</dbReference>
<dbReference type="PANTHER" id="PTHR43134:SF1">
    <property type="entry name" value="SIGNAL RECOGNITION PARTICLE RECEPTOR SUBUNIT ALPHA"/>
    <property type="match status" value="1"/>
</dbReference>
<dbReference type="Pfam" id="PF00448">
    <property type="entry name" value="SRP54"/>
    <property type="match status" value="1"/>
</dbReference>
<dbReference type="Pfam" id="PF02881">
    <property type="entry name" value="SRP54_N"/>
    <property type="match status" value="1"/>
</dbReference>
<dbReference type="SMART" id="SM00382">
    <property type="entry name" value="AAA"/>
    <property type="match status" value="1"/>
</dbReference>
<dbReference type="SMART" id="SM00962">
    <property type="entry name" value="SRP54"/>
    <property type="match status" value="1"/>
</dbReference>
<dbReference type="SMART" id="SM00963">
    <property type="entry name" value="SRP54_N"/>
    <property type="match status" value="1"/>
</dbReference>
<dbReference type="SUPFAM" id="SSF47364">
    <property type="entry name" value="Domain of the SRP/SRP receptor G-proteins"/>
    <property type="match status" value="1"/>
</dbReference>
<dbReference type="SUPFAM" id="SSF52540">
    <property type="entry name" value="P-loop containing nucleoside triphosphate hydrolases"/>
    <property type="match status" value="1"/>
</dbReference>
<protein>
    <recommendedName>
        <fullName evidence="1">Signal recognition particle receptor FtsY</fullName>
        <shortName evidence="1">SRP receptor</shortName>
        <ecNumber evidence="1">3.6.5.4</ecNumber>
    </recommendedName>
</protein>
<keyword id="KW-1003">Cell membrane</keyword>
<keyword id="KW-0963">Cytoplasm</keyword>
<keyword id="KW-0342">GTP-binding</keyword>
<keyword id="KW-0378">Hydrolase</keyword>
<keyword id="KW-0472">Membrane</keyword>
<keyword id="KW-0547">Nucleotide-binding</keyword>
<keyword id="KW-0675">Receptor</keyword>
<keyword id="KW-1185">Reference proteome</keyword>
<organism>
    <name type="scientific">Thermoplasma acidophilum (strain ATCC 25905 / DSM 1728 / JCM 9062 / NBRC 15155 / AMRC-C165)</name>
    <dbReference type="NCBI Taxonomy" id="273075"/>
    <lineage>
        <taxon>Archaea</taxon>
        <taxon>Methanobacteriati</taxon>
        <taxon>Thermoplasmatota</taxon>
        <taxon>Thermoplasmata</taxon>
        <taxon>Thermoplasmatales</taxon>
        <taxon>Thermoplasmataceae</taxon>
        <taxon>Thermoplasma</taxon>
    </lineage>
</organism>
<evidence type="ECO:0000255" key="1">
    <source>
        <dbReference type="HAMAP-Rule" id="MF_00920"/>
    </source>
</evidence>
<proteinExistence type="inferred from homology"/>
<accession>Q9HJ93</accession>
<gene>
    <name evidence="1" type="primary">ftsY</name>
    <name type="ordered locus">Ta1077</name>
</gene>